<dbReference type="EMBL" id="BC105360">
    <property type="status" value="NOT_ANNOTATED_CDS"/>
    <property type="molecule type" value="mRNA"/>
</dbReference>
<dbReference type="FunCoup" id="Q2KJG1">
    <property type="interactions" value="450"/>
</dbReference>
<dbReference type="STRING" id="9913.ENSBTAP00000004068"/>
<dbReference type="GlyCosmos" id="Q2KJG1">
    <property type="glycosylation" value="1 site, No reported glycans"/>
</dbReference>
<dbReference type="GlyGen" id="Q2KJG1">
    <property type="glycosylation" value="1 site"/>
</dbReference>
<dbReference type="PaxDb" id="9913-ENSBTAP00000004068"/>
<dbReference type="eggNOG" id="ENOG502QRV3">
    <property type="taxonomic scope" value="Eukaryota"/>
</dbReference>
<dbReference type="InParanoid" id="Q2KJG1"/>
<dbReference type="OrthoDB" id="5963614at2759"/>
<dbReference type="Proteomes" id="UP000009136">
    <property type="component" value="Unplaced"/>
</dbReference>
<dbReference type="GO" id="GO:0005576">
    <property type="term" value="C:extracellular region"/>
    <property type="evidence" value="ECO:0007669"/>
    <property type="project" value="UniProtKB-SubCell"/>
</dbReference>
<dbReference type="GO" id="GO:0031514">
    <property type="term" value="C:motile cilium"/>
    <property type="evidence" value="ECO:0007669"/>
    <property type="project" value="UniProtKB-SubCell"/>
</dbReference>
<dbReference type="GO" id="GO:0120212">
    <property type="term" value="C:sperm head-tail coupling apparatus"/>
    <property type="evidence" value="ECO:0000250"/>
    <property type="project" value="UniProtKB"/>
</dbReference>
<dbReference type="GO" id="GO:0032027">
    <property type="term" value="F:myosin light chain binding"/>
    <property type="evidence" value="ECO:0000318"/>
    <property type="project" value="GO_Central"/>
</dbReference>
<dbReference type="GO" id="GO:0030154">
    <property type="term" value="P:cell differentiation"/>
    <property type="evidence" value="ECO:0007669"/>
    <property type="project" value="UniProtKB-KW"/>
</dbReference>
<dbReference type="GO" id="GO:0044458">
    <property type="term" value="P:motile cilium assembly"/>
    <property type="evidence" value="ECO:0000250"/>
    <property type="project" value="UniProtKB"/>
</dbReference>
<dbReference type="GO" id="GO:0007283">
    <property type="term" value="P:spermatogenesis"/>
    <property type="evidence" value="ECO:0000250"/>
    <property type="project" value="UniProtKB"/>
</dbReference>
<dbReference type="InterPro" id="IPR042769">
    <property type="entry name" value="SPATA6_fam"/>
</dbReference>
<dbReference type="InterPro" id="IPR032732">
    <property type="entry name" value="SPATA6_N"/>
</dbReference>
<dbReference type="PANTHER" id="PTHR16435:SF3">
    <property type="entry name" value="SPERMATOGENESIS-ASSOCIATED PROTEIN 6"/>
    <property type="match status" value="1"/>
</dbReference>
<dbReference type="PANTHER" id="PTHR16435">
    <property type="entry name" value="SPERMATOGENESIS-ASSOCIATED PROTEIN 6 SPATA6"/>
    <property type="match status" value="1"/>
</dbReference>
<dbReference type="Pfam" id="PF14909">
    <property type="entry name" value="SPATA6"/>
    <property type="match status" value="1"/>
</dbReference>
<sequence length="487" mass="56137">MPKVKALQCALALEIRSVTCPGVVLKDKEDIYLSICVFGQYKKTQCVPANFPLVFNARMVFEKVFPEAVDPGDVVAQLEYDTALFELIQLVPPVGETLSTYDENTRDFMFPGPNQISGHHDSNRQVTMRRISGLRGIAPKLEFSTTSVITECLISSRKCRTQDKFVYHTAPVEKPHSRLQNRTSRSQKKKSKSPERNKYCINAKNYEQPTTSKSHSPSPYTKRRMCELSEDTRRRLAHLNLGPYEFKKETDKPPFVIRHVDPPSPRADALFGSPGRDCERDGWSRLHNDHSHLGCYRPKDYKVIRTPHGRDFDESLERCEDYLSSRSCSKPQHSARTLLVHSAPSTMPKHSPSPVLNRASLRERFHSDWCSPSNCDEIHDRVKNVLKSHQAHQRHLYDERDPEKEDELELKRGLLYRDSAYDSDPEYSSFQRPRGTLHLDDGEYWSNRAASYKGKSHRPIFENSMDKIYRNLYKKACSSVSHTQESF</sequence>
<proteinExistence type="evidence at transcript level"/>
<protein>
    <recommendedName>
        <fullName>Spermatogenesis-associated protein 6</fullName>
    </recommendedName>
</protein>
<feature type="signal peptide" evidence="4">
    <location>
        <begin position="1"/>
        <end position="17"/>
    </location>
</feature>
<feature type="chain" id="PRO_0000278440" description="Spermatogenesis-associated protein 6">
    <location>
        <begin position="18"/>
        <end position="487"/>
    </location>
</feature>
<feature type="region of interest" description="Disordered" evidence="5">
    <location>
        <begin position="170"/>
        <end position="221"/>
    </location>
</feature>
<feature type="compositionally biased region" description="Polar residues" evidence="5">
    <location>
        <begin position="205"/>
        <end position="219"/>
    </location>
</feature>
<feature type="modified residue" description="Phosphoserine" evidence="3">
    <location>
        <position position="216"/>
    </location>
</feature>
<feature type="modified residue" description="Phosphoserine" evidence="3">
    <location>
        <position position="218"/>
    </location>
</feature>
<feature type="modified residue" description="Phosphoserine" evidence="2">
    <location>
        <position position="264"/>
    </location>
</feature>
<feature type="modified residue" description="Phosphoserine" evidence="2">
    <location>
        <position position="273"/>
    </location>
</feature>
<feature type="modified residue" description="Phosphoserine" evidence="2">
    <location>
        <position position="324"/>
    </location>
</feature>
<feature type="modified residue" description="Phosphoserine" evidence="2">
    <location>
        <position position="342"/>
    </location>
</feature>
<feature type="modified residue" description="Phosphoserine" evidence="2">
    <location>
        <position position="345"/>
    </location>
</feature>
<feature type="modified residue" description="Phosphoserine" evidence="1">
    <location>
        <position position="353"/>
    </location>
</feature>
<feature type="modified residue" description="Phosphoserine" evidence="2">
    <location>
        <position position="423"/>
    </location>
</feature>
<feature type="modified residue" description="Phosphoserine" evidence="2">
    <location>
        <position position="464"/>
    </location>
</feature>
<feature type="modified residue" description="Phosphoserine" evidence="2">
    <location>
        <position position="486"/>
    </location>
</feature>
<feature type="glycosylation site" description="N-linked (GlcNAc...) asparagine" evidence="4">
    <location>
        <position position="181"/>
    </location>
</feature>
<feature type="cross-link" description="Glycyl lysine isopeptide (Lys-Gly) (interchain with G-Cter in SUMO2)" evidence="3">
    <location>
        <position position="247"/>
    </location>
</feature>
<organism>
    <name type="scientific">Bos taurus</name>
    <name type="common">Bovine</name>
    <dbReference type="NCBI Taxonomy" id="9913"/>
    <lineage>
        <taxon>Eukaryota</taxon>
        <taxon>Metazoa</taxon>
        <taxon>Chordata</taxon>
        <taxon>Craniata</taxon>
        <taxon>Vertebrata</taxon>
        <taxon>Euteleostomi</taxon>
        <taxon>Mammalia</taxon>
        <taxon>Eutheria</taxon>
        <taxon>Laurasiatheria</taxon>
        <taxon>Artiodactyla</taxon>
        <taxon>Ruminantia</taxon>
        <taxon>Pecora</taxon>
        <taxon>Bovidae</taxon>
        <taxon>Bovinae</taxon>
        <taxon>Bos</taxon>
    </lineage>
</organism>
<name>SPAT6_BOVIN</name>
<evidence type="ECO:0000250" key="1">
    <source>
        <dbReference type="UniProtKB" id="Q3U6K5"/>
    </source>
</evidence>
<evidence type="ECO:0000250" key="2">
    <source>
        <dbReference type="UniProtKB" id="Q99MU5"/>
    </source>
</evidence>
<evidence type="ECO:0000250" key="3">
    <source>
        <dbReference type="UniProtKB" id="Q9NWH7"/>
    </source>
</evidence>
<evidence type="ECO:0000255" key="4"/>
<evidence type="ECO:0000256" key="5">
    <source>
        <dbReference type="SAM" id="MobiDB-lite"/>
    </source>
</evidence>
<evidence type="ECO:0000305" key="6"/>
<gene>
    <name type="primary">SPATA6</name>
</gene>
<comment type="function">
    <text evidence="1">Required for formation of the sperm connecting piece during spermiogenesis. Sperm connecting piece is essential for linking the developing flagellum to the head during late spermiogenesis. May be involved in myosin-based microfilament transport through interaction with myosin subunits.</text>
</comment>
<comment type="subunit">
    <text evidence="1">Interacts with MYL6.</text>
</comment>
<comment type="subcellular location">
    <subcellularLocation>
        <location evidence="1">Secreted</location>
    </subcellularLocation>
    <subcellularLocation>
        <location evidence="1">Cell projection</location>
        <location evidence="1">Cilium</location>
        <location evidence="1">Flagellum</location>
    </subcellularLocation>
    <text evidence="1">Specifically localizes to the segmented columns and the capitulum of the sperm connecting piece.</text>
</comment>
<comment type="similarity">
    <text evidence="6">Belongs to the SPATA6 family.</text>
</comment>
<comment type="sequence caution" evidence="6">
    <conflict type="erroneous termination">
        <sequence resource="EMBL" id="BC105360"/>
    </conflict>
    <text>Truncated C-terminus.</text>
</comment>
<keyword id="KW-0966">Cell projection</keyword>
<keyword id="KW-0969">Cilium</keyword>
<keyword id="KW-0217">Developmental protein</keyword>
<keyword id="KW-0221">Differentiation</keyword>
<keyword id="KW-0282">Flagellum</keyword>
<keyword id="KW-0325">Glycoprotein</keyword>
<keyword id="KW-1017">Isopeptide bond</keyword>
<keyword id="KW-0597">Phosphoprotein</keyword>
<keyword id="KW-1185">Reference proteome</keyword>
<keyword id="KW-0964">Secreted</keyword>
<keyword id="KW-0732">Signal</keyword>
<keyword id="KW-0744">Spermatogenesis</keyword>
<keyword id="KW-0832">Ubl conjugation</keyword>
<accession>Q2KJG1</accession>
<reference key="1">
    <citation type="submission" date="2005-09" db="EMBL/GenBank/DDBJ databases">
        <authorList>
            <consortium name="NIH - Mammalian Gene Collection (MGC) project"/>
        </authorList>
    </citation>
    <scope>NUCLEOTIDE SEQUENCE [LARGE SCALE MRNA]</scope>
    <source>
        <strain>Crossbred X Angus</strain>
        <tissue>Liver</tissue>
    </source>
</reference>